<name>LPXD_POLAQ</name>
<evidence type="ECO:0000255" key="1">
    <source>
        <dbReference type="HAMAP-Rule" id="MF_00523"/>
    </source>
</evidence>
<gene>
    <name evidence="1" type="primary">lpxD</name>
    <name type="ordered locus">Pnuc_1441</name>
</gene>
<reference key="1">
    <citation type="journal article" date="2012" name="Stand. Genomic Sci.">
        <title>Complete genome sequence of Polynucleobacter necessarius subsp. asymbioticus type strain (QLW-P1DMWA-1(T)).</title>
        <authorList>
            <person name="Meincke L."/>
            <person name="Copeland A."/>
            <person name="Lapidus A."/>
            <person name="Lucas S."/>
            <person name="Berry K.W."/>
            <person name="Del Rio T.G."/>
            <person name="Hammon N."/>
            <person name="Dalin E."/>
            <person name="Tice H."/>
            <person name="Pitluck S."/>
            <person name="Richardson P."/>
            <person name="Bruce D."/>
            <person name="Goodwin L."/>
            <person name="Han C."/>
            <person name="Tapia R."/>
            <person name="Detter J.C."/>
            <person name="Schmutz J."/>
            <person name="Brettin T."/>
            <person name="Larimer F."/>
            <person name="Land M."/>
            <person name="Hauser L."/>
            <person name="Kyrpides N.C."/>
            <person name="Ivanova N."/>
            <person name="Goker M."/>
            <person name="Woyke T."/>
            <person name="Wu Q.L."/>
            <person name="Pockl M."/>
            <person name="Hahn M.W."/>
            <person name="Klenk H.P."/>
        </authorList>
    </citation>
    <scope>NUCLEOTIDE SEQUENCE [LARGE SCALE GENOMIC DNA]</scope>
    <source>
        <strain>DSM 18221 / CIP 109841 / QLW-P1DMWA-1</strain>
    </source>
</reference>
<feature type="chain" id="PRO_1000211751" description="UDP-3-O-acylglucosamine N-acyltransferase">
    <location>
        <begin position="1"/>
        <end position="355"/>
    </location>
</feature>
<feature type="active site" description="Proton acceptor" evidence="1">
    <location>
        <position position="252"/>
    </location>
</feature>
<sequence length="355" mass="37137">MLTAIELANQFQASLVGEASTVFNGLAPLERAQSSQISFLSNPLYRKQAADSSAGALIVSKADLEFLQANPGTHSSGRVYFVAKNPYATFARVAQYFARQSAPIYEPGIHSAAVVDPSASIPASCHIGPFVRIGAGVKLGERVAILGNTFVAENCDIASDTLIYPAVSLYFGTQIGERCIIHSGAVIGADGFGFAPDFSATGGEWVKIPQTGNVVIGSDVEIGASTTIDRGAMSDTIIGSGSKIDNQVQIAHNVVVGNCCVIAGCAAISGSTKIGNFCIIGGAANFAGHLTIADRTTVSGNTSIIRSITEPGQHYTGVYPSMLHGAWEKNAAILRGLDKIRQRLRLLDKNKSTES</sequence>
<proteinExistence type="inferred from homology"/>
<comment type="function">
    <text evidence="1">Catalyzes the N-acylation of UDP-3-O-acylglucosamine using 3-hydroxyacyl-ACP as the acyl donor. Is involved in the biosynthesis of lipid A, a phosphorylated glycolipid that anchors the lipopolysaccharide to the outer membrane of the cell.</text>
</comment>
<comment type="catalytic activity">
    <reaction evidence="1">
        <text>a UDP-3-O-[(3R)-3-hydroxyacyl]-alpha-D-glucosamine + a (3R)-hydroxyacyl-[ACP] = a UDP-2-N,3-O-bis[(3R)-3-hydroxyacyl]-alpha-D-glucosamine + holo-[ACP] + H(+)</text>
        <dbReference type="Rhea" id="RHEA:53836"/>
        <dbReference type="Rhea" id="RHEA-COMP:9685"/>
        <dbReference type="Rhea" id="RHEA-COMP:9945"/>
        <dbReference type="ChEBI" id="CHEBI:15378"/>
        <dbReference type="ChEBI" id="CHEBI:64479"/>
        <dbReference type="ChEBI" id="CHEBI:78827"/>
        <dbReference type="ChEBI" id="CHEBI:137740"/>
        <dbReference type="ChEBI" id="CHEBI:137748"/>
        <dbReference type="EC" id="2.3.1.191"/>
    </reaction>
</comment>
<comment type="pathway">
    <text evidence="1">Bacterial outer membrane biogenesis; LPS lipid A biosynthesis.</text>
</comment>
<comment type="subunit">
    <text evidence="1">Homotrimer.</text>
</comment>
<comment type="similarity">
    <text evidence="1">Belongs to the transferase hexapeptide repeat family. LpxD subfamily.</text>
</comment>
<keyword id="KW-0012">Acyltransferase</keyword>
<keyword id="KW-0441">Lipid A biosynthesis</keyword>
<keyword id="KW-0444">Lipid biosynthesis</keyword>
<keyword id="KW-0443">Lipid metabolism</keyword>
<keyword id="KW-1185">Reference proteome</keyword>
<keyword id="KW-0677">Repeat</keyword>
<keyword id="KW-0808">Transferase</keyword>
<dbReference type="EC" id="2.3.1.191" evidence="1"/>
<dbReference type="EMBL" id="CP000655">
    <property type="protein sequence ID" value="ABP34655.1"/>
    <property type="molecule type" value="Genomic_DNA"/>
</dbReference>
<dbReference type="RefSeq" id="WP_011903278.1">
    <property type="nucleotide sequence ID" value="NC_009379.1"/>
</dbReference>
<dbReference type="SMR" id="A4SYU1"/>
<dbReference type="GeneID" id="31481831"/>
<dbReference type="KEGG" id="pnu:Pnuc_1441"/>
<dbReference type="eggNOG" id="COG1044">
    <property type="taxonomic scope" value="Bacteria"/>
</dbReference>
<dbReference type="HOGENOM" id="CLU_049865_0_1_4"/>
<dbReference type="UniPathway" id="UPA00973"/>
<dbReference type="Proteomes" id="UP000000231">
    <property type="component" value="Chromosome"/>
</dbReference>
<dbReference type="GO" id="GO:0016020">
    <property type="term" value="C:membrane"/>
    <property type="evidence" value="ECO:0007669"/>
    <property type="project" value="GOC"/>
</dbReference>
<dbReference type="GO" id="GO:0016410">
    <property type="term" value="F:N-acyltransferase activity"/>
    <property type="evidence" value="ECO:0007669"/>
    <property type="project" value="InterPro"/>
</dbReference>
<dbReference type="GO" id="GO:0009245">
    <property type="term" value="P:lipid A biosynthetic process"/>
    <property type="evidence" value="ECO:0007669"/>
    <property type="project" value="UniProtKB-UniRule"/>
</dbReference>
<dbReference type="CDD" id="cd03352">
    <property type="entry name" value="LbH_LpxD"/>
    <property type="match status" value="1"/>
</dbReference>
<dbReference type="Gene3D" id="2.160.10.10">
    <property type="entry name" value="Hexapeptide repeat proteins"/>
    <property type="match status" value="1"/>
</dbReference>
<dbReference type="Gene3D" id="3.40.1390.10">
    <property type="entry name" value="MurE/MurF, N-terminal domain"/>
    <property type="match status" value="1"/>
</dbReference>
<dbReference type="HAMAP" id="MF_00523">
    <property type="entry name" value="LpxD"/>
    <property type="match status" value="1"/>
</dbReference>
<dbReference type="InterPro" id="IPR001451">
    <property type="entry name" value="Hexapep"/>
</dbReference>
<dbReference type="InterPro" id="IPR018357">
    <property type="entry name" value="Hexapep_transf_CS"/>
</dbReference>
<dbReference type="InterPro" id="IPR007691">
    <property type="entry name" value="LpxD"/>
</dbReference>
<dbReference type="InterPro" id="IPR011004">
    <property type="entry name" value="Trimer_LpxA-like_sf"/>
</dbReference>
<dbReference type="InterPro" id="IPR020573">
    <property type="entry name" value="UDP_GlcNAc_AcTrfase_non-rep"/>
</dbReference>
<dbReference type="NCBIfam" id="TIGR01853">
    <property type="entry name" value="lipid_A_lpxD"/>
    <property type="match status" value="1"/>
</dbReference>
<dbReference type="NCBIfam" id="NF002060">
    <property type="entry name" value="PRK00892.1"/>
    <property type="match status" value="1"/>
</dbReference>
<dbReference type="PANTHER" id="PTHR43378">
    <property type="entry name" value="UDP-3-O-ACYLGLUCOSAMINE N-ACYLTRANSFERASE"/>
    <property type="match status" value="1"/>
</dbReference>
<dbReference type="PANTHER" id="PTHR43378:SF2">
    <property type="entry name" value="UDP-3-O-ACYLGLUCOSAMINE N-ACYLTRANSFERASE 1, MITOCHONDRIAL-RELATED"/>
    <property type="match status" value="1"/>
</dbReference>
<dbReference type="Pfam" id="PF00132">
    <property type="entry name" value="Hexapep"/>
    <property type="match status" value="1"/>
</dbReference>
<dbReference type="Pfam" id="PF04613">
    <property type="entry name" value="LpxD"/>
    <property type="match status" value="1"/>
</dbReference>
<dbReference type="SUPFAM" id="SSF51161">
    <property type="entry name" value="Trimeric LpxA-like enzymes"/>
    <property type="match status" value="1"/>
</dbReference>
<dbReference type="PROSITE" id="PS00101">
    <property type="entry name" value="HEXAPEP_TRANSFERASES"/>
    <property type="match status" value="1"/>
</dbReference>
<accession>A4SYU1</accession>
<protein>
    <recommendedName>
        <fullName evidence="1">UDP-3-O-acylglucosamine N-acyltransferase</fullName>
        <ecNumber evidence="1">2.3.1.191</ecNumber>
    </recommendedName>
</protein>
<organism>
    <name type="scientific">Polynucleobacter asymbioticus (strain DSM 18221 / CIP 109841 / QLW-P1DMWA-1)</name>
    <name type="common">Polynucleobacter necessarius subsp. asymbioticus</name>
    <dbReference type="NCBI Taxonomy" id="312153"/>
    <lineage>
        <taxon>Bacteria</taxon>
        <taxon>Pseudomonadati</taxon>
        <taxon>Pseudomonadota</taxon>
        <taxon>Betaproteobacteria</taxon>
        <taxon>Burkholderiales</taxon>
        <taxon>Burkholderiaceae</taxon>
        <taxon>Polynucleobacter</taxon>
    </lineage>
</organism>